<gene>
    <name type="primary">ITK</name>
    <name type="synonym">EMT</name>
    <name type="synonym">LYK</name>
</gene>
<comment type="function">
    <text evidence="2 10 12 20">Tyrosine kinase that plays an essential role in regulation of the adaptive immune response. Regulates the development, function and differentiation of conventional T-cells and nonconventional NKT-cells. When antigen presenting cells (APC) activate T-cell receptor (TCR), a series of phosphorylation lead to the recruitment of ITK to the cell membrane, in the vicinity of the stimulated TCR receptor, where it is phosphorylated by LCK. Phosphorylation leads to ITK autophosphorylation and full activation. Once activated, phosphorylates PLCG1, leading to the activation of this lipase and subsequent cleavage of its substrates. In turn, the endoplasmic reticulum releases calcium in the cytoplasm and the nuclear activator of activated T-cells (NFAT) translocates into the nucleus to perform its transcriptional duty. Phosphorylates 2 essential adapter proteins: the linker for activation of T-cells/LAT protein and LCP2. Then, a large number of signaling molecules such as VAV1 are recruited and ultimately lead to lymphokine production, T-cell proliferation and differentiation (PubMed:12186560, PubMed:12682224, PubMed:21725281). Required for TCR-mediated calcium response in gamma-delta T-cells, may also be involved in the modulation of the transcriptomic signature in the Vgamma2-positive subset of immature gamma-delta T-cells (By similarity). Phosphorylates TBX21 at 'Tyr-530' and mediates its interaction with GATA3 (By similarity).</text>
</comment>
<comment type="catalytic activity">
    <reaction evidence="8">
        <text>L-tyrosyl-[protein] + ATP = O-phospho-L-tyrosyl-[protein] + ADP + H(+)</text>
        <dbReference type="Rhea" id="RHEA:10596"/>
        <dbReference type="Rhea" id="RHEA-COMP:10136"/>
        <dbReference type="Rhea" id="RHEA-COMP:20101"/>
        <dbReference type="ChEBI" id="CHEBI:15378"/>
        <dbReference type="ChEBI" id="CHEBI:30616"/>
        <dbReference type="ChEBI" id="CHEBI:46858"/>
        <dbReference type="ChEBI" id="CHEBI:61978"/>
        <dbReference type="ChEBI" id="CHEBI:456216"/>
        <dbReference type="EC" id="2.7.10.2"/>
    </reaction>
</comment>
<comment type="cofactor">
    <cofactor evidence="1">
        <name>Zn(2+)</name>
        <dbReference type="ChEBI" id="CHEBI:29105"/>
    </cofactor>
    <text evidence="1">Binds 1 zinc ion per subunit.</text>
</comment>
<comment type="subunit">
    <text evidence="2 13 14 18">Homooligomerizes; this association negatively regulates kinase activity (By similarity). Interacts with PPIA/CYPA; this interaction regulates TCR signal strength via a proline-directed conformational switch in ITK. Interacts with THEMIS (By similarity). Interacts with FASLG. Interacts with VAV1; this interaction is important for VAV1 localization and TCR-induced actin polarization. Interacts with TBX21 (By similarity).</text>
</comment>
<comment type="interaction">
    <interactant intactId="EBI-968552">
        <id>Q08881</id>
    </interactant>
    <interactant intactId="EBI-641062">
        <id>P04626</id>
        <label>ERBB2</label>
    </interactant>
    <organismsDiffer>false</organismsDiffer>
    <experiments>2</experiments>
</comment>
<comment type="interaction">
    <interactant intactId="EBI-968552">
        <id>Q08881</id>
    </interactant>
    <interactant intactId="EBI-495538">
        <id>P48023</id>
        <label>FASLG</label>
    </interactant>
    <organismsDiffer>false</organismsDiffer>
    <experiments>3</experiments>
</comment>
<comment type="interaction">
    <interactant intactId="EBI-968552">
        <id>Q08881</id>
    </interactant>
    <interactant intactId="EBI-352572">
        <id>P08238</id>
        <label>HSP90AB1</label>
    </interactant>
    <organismsDiffer>false</organismsDiffer>
    <experiments>3</experiments>
</comment>
<comment type="interaction">
    <interactant intactId="EBI-968552">
        <id>Q08881</id>
    </interactant>
    <interactant intactId="EBI-346946">
        <id>Q13094</id>
        <label>LCP2</label>
    </interactant>
    <organismsDiffer>false</organismsDiffer>
    <experiments>3</experiments>
</comment>
<comment type="interaction">
    <interactant intactId="EBI-968552">
        <id>Q08881</id>
    </interactant>
    <interactant intactId="EBI-476295">
        <id>P31947</id>
        <label>SFN</label>
    </interactant>
    <organismsDiffer>false</organismsDiffer>
    <experiments>2</experiments>
</comment>
<comment type="interaction">
    <interactant intactId="EBI-968552">
        <id>Q08881</id>
    </interactant>
    <interactant intactId="EBI-356498">
        <id>P62258</id>
        <label>YWHAE</label>
    </interactant>
    <organismsDiffer>false</organismsDiffer>
    <experiments>2</experiments>
</comment>
<comment type="interaction">
    <interactant intactId="EBI-968552">
        <id>Q08881</id>
    </interactant>
    <interactant intactId="EBI-520788">
        <id>P10686</id>
        <label>Plcg1</label>
    </interactant>
    <organismsDiffer>true</organismsDiffer>
    <experiments>2</experiments>
</comment>
<comment type="subcellular location">
    <subcellularLocation>
        <location evidence="15">Cytoplasm</location>
    </subcellularLocation>
    <subcellularLocation>
        <location evidence="2">Nucleus</location>
    </subcellularLocation>
    <text>Localizes in the vicinity of cell surface receptors in the plasma membrane after receptor stimulation.</text>
</comment>
<comment type="tissue specificity">
    <text>T-cell lines and natural killer cell lines.</text>
</comment>
<comment type="induction">
    <text evidence="21 23">Through a myriad of surface receptors including the TCR/CD3 signaling complex, coreceptors, or chemokine receptors.</text>
</comment>
<comment type="domain">
    <text evidence="9">The N-terminal PH domain allows ITK to be recruited to the plasma membrane by an activated PI3 kinase. This domain also contains a proline-rich region (PRR). The adjoining domain is a SH3 domain, which binds to PRR (from itself or from other proteins). Next, a SH2 domain is required for binding tyrosine-phosphorylated substrates. In the C-terminal region, the kinase domain is required for tyrosine phosphorylation.</text>
</comment>
<comment type="PTM">
    <text evidence="11 22">Phosphorylated at Tyr-512 in the activation loop of the kinase domain by LCK. Subsequent autophosphorylation at Tyr-180 leads to the kinase activation. The autophosphorylated Tyr-180 lies within the substrate binding sequence of the SH3 domain.</text>
</comment>
<comment type="PTM">
    <text evidence="19">Ubiquitinated.</text>
</comment>
<comment type="disease" evidence="17">
    <disease id="DI-02628">
        <name>Lymphoproliferative syndrome 1</name>
        <acronym>LPFS1</acronym>
        <description>A rare immunodeficiency characterized by extreme susceptibility to infection with Epstein-Barr virus (EBV). Inadequate immune response to EBV can have a fatal outcome. Clinical features include splenomegaly, lymphadenopathy, anemia, thrombocytopenia, pancytopenia, recurrent infections. There is an increased risk for lymphoma.</description>
        <dbReference type="MIM" id="613011"/>
    </disease>
    <text>The disease is caused by variants affecting the gene represented in this entry.</text>
</comment>
<comment type="similarity">
    <text evidence="4">Belongs to the protein kinase superfamily. Tyr protein kinase family. TEC subfamily.</text>
</comment>
<comment type="online information" name="Atlas of Genetics and Cytogenetics in Oncology and Haematology">
    <link uri="https://atlasgeneticsoncology.org/gene/43329/ITK"/>
</comment>
<evidence type="ECO:0000250" key="1"/>
<evidence type="ECO:0000250" key="2">
    <source>
        <dbReference type="UniProtKB" id="Q03526"/>
    </source>
</evidence>
<evidence type="ECO:0000255" key="3">
    <source>
        <dbReference type="PROSITE-ProRule" id="PRU00145"/>
    </source>
</evidence>
<evidence type="ECO:0000255" key="4">
    <source>
        <dbReference type="PROSITE-ProRule" id="PRU00159"/>
    </source>
</evidence>
<evidence type="ECO:0000255" key="5">
    <source>
        <dbReference type="PROSITE-ProRule" id="PRU00191"/>
    </source>
</evidence>
<evidence type="ECO:0000255" key="6">
    <source>
        <dbReference type="PROSITE-ProRule" id="PRU00192"/>
    </source>
</evidence>
<evidence type="ECO:0000255" key="7">
    <source>
        <dbReference type="PROSITE-ProRule" id="PRU00432"/>
    </source>
</evidence>
<evidence type="ECO:0000255" key="8">
    <source>
        <dbReference type="PROSITE-ProRule" id="PRU10028"/>
    </source>
</evidence>
<evidence type="ECO:0000269" key="9">
    <source>
    </source>
</evidence>
<evidence type="ECO:0000269" key="10">
    <source>
    </source>
</evidence>
<evidence type="ECO:0000269" key="11">
    <source>
    </source>
</evidence>
<evidence type="ECO:0000269" key="12">
    <source>
    </source>
</evidence>
<evidence type="ECO:0000269" key="13">
    <source>
    </source>
</evidence>
<evidence type="ECO:0000269" key="14">
    <source>
    </source>
</evidence>
<evidence type="ECO:0000269" key="15">
    <source>
    </source>
</evidence>
<evidence type="ECO:0000269" key="16">
    <source>
    </source>
</evidence>
<evidence type="ECO:0000269" key="17">
    <source>
    </source>
</evidence>
<evidence type="ECO:0000269" key="18">
    <source>
    </source>
</evidence>
<evidence type="ECO:0000269" key="19">
    <source>
    </source>
</evidence>
<evidence type="ECO:0000269" key="20">
    <source>
    </source>
</evidence>
<evidence type="ECO:0000269" key="21">
    <source>
    </source>
</evidence>
<evidence type="ECO:0000269" key="22">
    <source>
    </source>
</evidence>
<evidence type="ECO:0000269" key="23">
    <source>
    </source>
</evidence>
<evidence type="ECO:0000305" key="24"/>
<evidence type="ECO:0007744" key="25">
    <source>
    </source>
</evidence>
<evidence type="ECO:0007829" key="26">
    <source>
        <dbReference type="PDB" id="2E6I"/>
    </source>
</evidence>
<evidence type="ECO:0007829" key="27">
    <source>
        <dbReference type="PDB" id="2LMJ"/>
    </source>
</evidence>
<evidence type="ECO:0007829" key="28">
    <source>
        <dbReference type="PDB" id="2YUQ"/>
    </source>
</evidence>
<evidence type="ECO:0007829" key="29">
    <source>
        <dbReference type="PDB" id="3T9T"/>
    </source>
</evidence>
<evidence type="ECO:0007829" key="30">
    <source>
        <dbReference type="PDB" id="3V8W"/>
    </source>
</evidence>
<evidence type="ECO:0007829" key="31">
    <source>
        <dbReference type="PDB" id="4HCU"/>
    </source>
</evidence>
<evidence type="ECO:0007829" key="32">
    <source>
        <dbReference type="PDB" id="4KIO"/>
    </source>
</evidence>
<evidence type="ECO:0007829" key="33">
    <source>
        <dbReference type="PDB" id="4PQN"/>
    </source>
</evidence>
<dbReference type="EC" id="2.7.10.2"/>
<dbReference type="EMBL" id="D13720">
    <property type="protein sequence ID" value="BAA02873.1"/>
    <property type="molecule type" value="mRNA"/>
</dbReference>
<dbReference type="EMBL" id="L10717">
    <property type="protein sequence ID" value="AAA36748.1"/>
    <property type="molecule type" value="mRNA"/>
</dbReference>
<dbReference type="EMBL" id="S65186">
    <property type="protein sequence ID" value="AAB28072.2"/>
    <property type="molecule type" value="mRNA"/>
</dbReference>
<dbReference type="EMBL" id="AK312846">
    <property type="protein sequence ID" value="BAG35699.1"/>
    <property type="molecule type" value="mRNA"/>
</dbReference>
<dbReference type="EMBL" id="CH471062">
    <property type="protein sequence ID" value="EAW61608.1"/>
    <property type="molecule type" value="Genomic_DNA"/>
</dbReference>
<dbReference type="EMBL" id="BC109077">
    <property type="protein sequence ID" value="AAI09078.1"/>
    <property type="molecule type" value="mRNA"/>
</dbReference>
<dbReference type="EMBL" id="BC109078">
    <property type="protein sequence ID" value="AAI09079.1"/>
    <property type="molecule type" value="mRNA"/>
</dbReference>
<dbReference type="CCDS" id="CCDS4336.1"/>
<dbReference type="PIR" id="S33253">
    <property type="entry name" value="S33253"/>
</dbReference>
<dbReference type="RefSeq" id="NP_005537.3">
    <property type="nucleotide sequence ID" value="NM_005546.3"/>
</dbReference>
<dbReference type="PDB" id="1SM2">
    <property type="method" value="X-ray"/>
    <property type="resolution" value="2.30 A"/>
    <property type="chains" value="A/B=357-620"/>
</dbReference>
<dbReference type="PDB" id="1SNU">
    <property type="method" value="X-ray"/>
    <property type="resolution" value="2.50 A"/>
    <property type="chains" value="A/B=357-620"/>
</dbReference>
<dbReference type="PDB" id="1SNX">
    <property type="method" value="X-ray"/>
    <property type="resolution" value="3.20 A"/>
    <property type="chains" value="A/B=357-620"/>
</dbReference>
<dbReference type="PDB" id="2E6I">
    <property type="method" value="NMR"/>
    <property type="chains" value="A=113-169"/>
</dbReference>
<dbReference type="PDB" id="2LMJ">
    <property type="method" value="NMR"/>
    <property type="chains" value="A=171-231"/>
</dbReference>
<dbReference type="PDB" id="2YUQ">
    <property type="method" value="NMR"/>
    <property type="chains" value="A=162-239"/>
</dbReference>
<dbReference type="PDB" id="3MIY">
    <property type="method" value="X-ray"/>
    <property type="resolution" value="1.67 A"/>
    <property type="chains" value="A/B=357-620"/>
</dbReference>
<dbReference type="PDB" id="3MJ1">
    <property type="method" value="X-ray"/>
    <property type="resolution" value="1.72 A"/>
    <property type="chains" value="A=357-620"/>
</dbReference>
<dbReference type="PDB" id="3MJ2">
    <property type="method" value="X-ray"/>
    <property type="resolution" value="1.90 A"/>
    <property type="chains" value="A=357-620"/>
</dbReference>
<dbReference type="PDB" id="3QGW">
    <property type="method" value="X-ray"/>
    <property type="resolution" value="2.10 A"/>
    <property type="chains" value="A/B=357-620"/>
</dbReference>
<dbReference type="PDB" id="3QGY">
    <property type="method" value="X-ray"/>
    <property type="resolution" value="2.10 A"/>
    <property type="chains" value="A/B=357-620"/>
</dbReference>
<dbReference type="PDB" id="3T9T">
    <property type="method" value="X-ray"/>
    <property type="resolution" value="1.65 A"/>
    <property type="chains" value="A=354-620"/>
</dbReference>
<dbReference type="PDB" id="3V5J">
    <property type="method" value="X-ray"/>
    <property type="resolution" value="2.59 A"/>
    <property type="chains" value="A/B=357-620"/>
</dbReference>
<dbReference type="PDB" id="3V5L">
    <property type="method" value="X-ray"/>
    <property type="resolution" value="1.86 A"/>
    <property type="chains" value="A/B/C/D=357-620"/>
</dbReference>
<dbReference type="PDB" id="3V8T">
    <property type="method" value="X-ray"/>
    <property type="resolution" value="2.00 A"/>
    <property type="chains" value="A/B=357-620"/>
</dbReference>
<dbReference type="PDB" id="3V8W">
    <property type="method" value="X-ray"/>
    <property type="resolution" value="2.27 A"/>
    <property type="chains" value="A/B=357-620"/>
</dbReference>
<dbReference type="PDB" id="4HCT">
    <property type="method" value="X-ray"/>
    <property type="resolution" value="1.48 A"/>
    <property type="chains" value="A=354-620"/>
</dbReference>
<dbReference type="PDB" id="4HCU">
    <property type="method" value="X-ray"/>
    <property type="resolution" value="1.43 A"/>
    <property type="chains" value="A=354-620"/>
</dbReference>
<dbReference type="PDB" id="4HCV">
    <property type="method" value="X-ray"/>
    <property type="resolution" value="1.48 A"/>
    <property type="chains" value="A=354-620"/>
</dbReference>
<dbReference type="PDB" id="4KIO">
    <property type="method" value="X-ray"/>
    <property type="resolution" value="2.18 A"/>
    <property type="chains" value="A/B/C/D=357-620"/>
</dbReference>
<dbReference type="PDB" id="4L7S">
    <property type="method" value="X-ray"/>
    <property type="resolution" value="2.03 A"/>
    <property type="chains" value="A/B=357-620"/>
</dbReference>
<dbReference type="PDB" id="4M0Y">
    <property type="method" value="X-ray"/>
    <property type="resolution" value="1.70 A"/>
    <property type="chains" value="A=354-620"/>
</dbReference>
<dbReference type="PDB" id="4M0Z">
    <property type="method" value="X-ray"/>
    <property type="resolution" value="2.00 A"/>
    <property type="chains" value="A=354-620"/>
</dbReference>
<dbReference type="PDB" id="4M12">
    <property type="method" value="X-ray"/>
    <property type="resolution" value="2.15 A"/>
    <property type="chains" value="A=354-620"/>
</dbReference>
<dbReference type="PDB" id="4M13">
    <property type="method" value="X-ray"/>
    <property type="resolution" value="1.85 A"/>
    <property type="chains" value="A=354-620"/>
</dbReference>
<dbReference type="PDB" id="4M14">
    <property type="method" value="X-ray"/>
    <property type="resolution" value="1.55 A"/>
    <property type="chains" value="A=354-620"/>
</dbReference>
<dbReference type="PDB" id="4M15">
    <property type="method" value="X-ray"/>
    <property type="resolution" value="1.52 A"/>
    <property type="chains" value="A=354-620"/>
</dbReference>
<dbReference type="PDB" id="4MF0">
    <property type="method" value="X-ray"/>
    <property type="resolution" value="2.67 A"/>
    <property type="chains" value="A/B=357-620"/>
</dbReference>
<dbReference type="PDB" id="4MF1">
    <property type="method" value="X-ray"/>
    <property type="resolution" value="2.11 A"/>
    <property type="chains" value="A/B=357-620"/>
</dbReference>
<dbReference type="PDB" id="4PP9">
    <property type="method" value="X-ray"/>
    <property type="resolution" value="2.58 A"/>
    <property type="chains" value="A/B=357-620"/>
</dbReference>
<dbReference type="PDB" id="4PPA">
    <property type="method" value="X-ray"/>
    <property type="resolution" value="2.67 A"/>
    <property type="chains" value="A/B=357-620"/>
</dbReference>
<dbReference type="PDB" id="4PPB">
    <property type="method" value="X-ray"/>
    <property type="resolution" value="2.82 A"/>
    <property type="chains" value="A/B=357-620"/>
</dbReference>
<dbReference type="PDB" id="4PPC">
    <property type="method" value="X-ray"/>
    <property type="resolution" value="2.95 A"/>
    <property type="chains" value="A/B=357-620"/>
</dbReference>
<dbReference type="PDB" id="4PQN">
    <property type="method" value="X-ray"/>
    <property type="resolution" value="1.71 A"/>
    <property type="chains" value="A=357-620"/>
</dbReference>
<dbReference type="PDB" id="4QD6">
    <property type="method" value="X-ray"/>
    <property type="resolution" value="2.45 A"/>
    <property type="chains" value="A/B=357-620"/>
</dbReference>
<dbReference type="PDB" id="4RFM">
    <property type="method" value="X-ray"/>
    <property type="resolution" value="2.10 A"/>
    <property type="chains" value="A=357-620"/>
</dbReference>
<dbReference type="PDBsum" id="1SM2"/>
<dbReference type="PDBsum" id="1SNU"/>
<dbReference type="PDBsum" id="1SNX"/>
<dbReference type="PDBsum" id="2E6I"/>
<dbReference type="PDBsum" id="2LMJ"/>
<dbReference type="PDBsum" id="2YUQ"/>
<dbReference type="PDBsum" id="3MIY"/>
<dbReference type="PDBsum" id="3MJ1"/>
<dbReference type="PDBsum" id="3MJ2"/>
<dbReference type="PDBsum" id="3QGW"/>
<dbReference type="PDBsum" id="3QGY"/>
<dbReference type="PDBsum" id="3T9T"/>
<dbReference type="PDBsum" id="3V5J"/>
<dbReference type="PDBsum" id="3V5L"/>
<dbReference type="PDBsum" id="3V8T"/>
<dbReference type="PDBsum" id="3V8W"/>
<dbReference type="PDBsum" id="4HCT"/>
<dbReference type="PDBsum" id="4HCU"/>
<dbReference type="PDBsum" id="4HCV"/>
<dbReference type="PDBsum" id="4KIO"/>
<dbReference type="PDBsum" id="4L7S"/>
<dbReference type="PDBsum" id="4M0Y"/>
<dbReference type="PDBsum" id="4M0Z"/>
<dbReference type="PDBsum" id="4M12"/>
<dbReference type="PDBsum" id="4M13"/>
<dbReference type="PDBsum" id="4M14"/>
<dbReference type="PDBsum" id="4M15"/>
<dbReference type="PDBsum" id="4MF0"/>
<dbReference type="PDBsum" id="4MF1"/>
<dbReference type="PDBsum" id="4PP9"/>
<dbReference type="PDBsum" id="4PPA"/>
<dbReference type="PDBsum" id="4PPB"/>
<dbReference type="PDBsum" id="4PPC"/>
<dbReference type="PDBsum" id="4PQN"/>
<dbReference type="PDBsum" id="4QD6"/>
<dbReference type="PDBsum" id="4RFM"/>
<dbReference type="BMRB" id="Q08881"/>
<dbReference type="SMR" id="Q08881"/>
<dbReference type="BioGRID" id="109907">
    <property type="interactions" value="52"/>
</dbReference>
<dbReference type="CORUM" id="Q08881"/>
<dbReference type="DIP" id="DIP-29974N"/>
<dbReference type="FunCoup" id="Q08881">
    <property type="interactions" value="1866"/>
</dbReference>
<dbReference type="IntAct" id="Q08881">
    <property type="interactions" value="33"/>
</dbReference>
<dbReference type="MINT" id="Q08881"/>
<dbReference type="STRING" id="9606.ENSP00000398655"/>
<dbReference type="BindingDB" id="Q08881"/>
<dbReference type="ChEMBL" id="CHEMBL2959"/>
<dbReference type="DrugBank" id="DB12010">
    <property type="generic name" value="Fostamatinib"/>
</dbReference>
<dbReference type="DrugBank" id="DB06589">
    <property type="generic name" value="Pazopanib"/>
</dbReference>
<dbReference type="DrugBank" id="DB14924">
    <property type="generic name" value="Ritlecitinib"/>
</dbReference>
<dbReference type="DrugBank" id="DB02010">
    <property type="generic name" value="Staurosporine"/>
</dbReference>
<dbReference type="DrugBank" id="DB15035">
    <property type="generic name" value="Zanubrutinib"/>
</dbReference>
<dbReference type="DrugCentral" id="Q08881"/>
<dbReference type="GuidetoPHARMACOLOGY" id="2046"/>
<dbReference type="GlyGen" id="Q08881">
    <property type="glycosylation" value="1 site"/>
</dbReference>
<dbReference type="iPTMnet" id="Q08881"/>
<dbReference type="PhosphoSitePlus" id="Q08881"/>
<dbReference type="BioMuta" id="ITK"/>
<dbReference type="DMDM" id="585361"/>
<dbReference type="CPTAC" id="CPTAC-2862"/>
<dbReference type="CPTAC" id="CPTAC-2863"/>
<dbReference type="jPOST" id="Q08881"/>
<dbReference type="MassIVE" id="Q08881"/>
<dbReference type="PaxDb" id="9606-ENSP00000398655"/>
<dbReference type="PeptideAtlas" id="Q08881"/>
<dbReference type="ProteomicsDB" id="58650"/>
<dbReference type="Pumba" id="Q08881"/>
<dbReference type="ABCD" id="Q08881">
    <property type="antibodies" value="4 sequenced antibodies"/>
</dbReference>
<dbReference type="Antibodypedia" id="16533">
    <property type="antibodies" value="523 antibodies from 41 providers"/>
</dbReference>
<dbReference type="DNASU" id="3702"/>
<dbReference type="Ensembl" id="ENST00000422843.8">
    <property type="protein sequence ID" value="ENSP00000398655.4"/>
    <property type="gene ID" value="ENSG00000113263.14"/>
</dbReference>
<dbReference type="GeneID" id="3702"/>
<dbReference type="KEGG" id="hsa:3702"/>
<dbReference type="MANE-Select" id="ENST00000422843.8">
    <property type="protein sequence ID" value="ENSP00000398655.4"/>
    <property type="RefSeq nucleotide sequence ID" value="NM_005546.4"/>
    <property type="RefSeq protein sequence ID" value="NP_005537.3"/>
</dbReference>
<dbReference type="UCSC" id="uc003lwo.2">
    <property type="organism name" value="human"/>
</dbReference>
<dbReference type="AGR" id="HGNC:6171"/>
<dbReference type="CTD" id="3702"/>
<dbReference type="DisGeNET" id="3702"/>
<dbReference type="GeneCards" id="ITK"/>
<dbReference type="HGNC" id="HGNC:6171">
    <property type="gene designation" value="ITK"/>
</dbReference>
<dbReference type="HPA" id="ENSG00000113263">
    <property type="expression patterns" value="Tissue enriched (lymphoid)"/>
</dbReference>
<dbReference type="MalaCards" id="ITK"/>
<dbReference type="MIM" id="186973">
    <property type="type" value="gene"/>
</dbReference>
<dbReference type="MIM" id="613011">
    <property type="type" value="phenotype"/>
</dbReference>
<dbReference type="neXtProt" id="NX_Q08881"/>
<dbReference type="OpenTargets" id="ENSG00000113263"/>
<dbReference type="Orphanet" id="538963">
    <property type="disease" value="Combined immunodeficiency due to ITK deficiency"/>
</dbReference>
<dbReference type="PharmGKB" id="PA29968"/>
<dbReference type="VEuPathDB" id="HostDB:ENSG00000113263"/>
<dbReference type="eggNOG" id="KOG0197">
    <property type="taxonomic scope" value="Eukaryota"/>
</dbReference>
<dbReference type="GeneTree" id="ENSGT00940000158850"/>
<dbReference type="HOGENOM" id="CLU_000288_7_2_1"/>
<dbReference type="InParanoid" id="Q08881"/>
<dbReference type="OMA" id="GYWLEKT"/>
<dbReference type="OrthoDB" id="4062651at2759"/>
<dbReference type="PAN-GO" id="Q08881">
    <property type="GO annotations" value="5 GO annotations based on evolutionary models"/>
</dbReference>
<dbReference type="PhylomeDB" id="Q08881"/>
<dbReference type="TreeFam" id="TF351634"/>
<dbReference type="BRENDA" id="2.7.10.2">
    <property type="organism ID" value="2681"/>
</dbReference>
<dbReference type="PathwayCommons" id="Q08881"/>
<dbReference type="Reactome" id="R-HSA-202433">
    <property type="pathway name" value="Generation of second messenger molecules"/>
</dbReference>
<dbReference type="Reactome" id="R-HSA-2871809">
    <property type="pathway name" value="FCERI mediated Ca+2 mobilization"/>
</dbReference>
<dbReference type="SignaLink" id="Q08881"/>
<dbReference type="SIGNOR" id="Q08881"/>
<dbReference type="BioGRID-ORCS" id="3702">
    <property type="hits" value="17 hits in 1184 CRISPR screens"/>
</dbReference>
<dbReference type="CD-CODE" id="F345034F">
    <property type="entry name" value="Signaling cluster"/>
</dbReference>
<dbReference type="ChiTaRS" id="ITK">
    <property type="organism name" value="human"/>
</dbReference>
<dbReference type="EvolutionaryTrace" id="Q08881"/>
<dbReference type="GeneWiki" id="ITK_(gene)"/>
<dbReference type="GenomeRNAi" id="3702"/>
<dbReference type="Pharos" id="Q08881">
    <property type="development level" value="Tclin"/>
</dbReference>
<dbReference type="PRO" id="PR:Q08881"/>
<dbReference type="Proteomes" id="UP000005640">
    <property type="component" value="Chromosome 5"/>
</dbReference>
<dbReference type="RNAct" id="Q08881">
    <property type="molecule type" value="protein"/>
</dbReference>
<dbReference type="Bgee" id="ENSG00000113263">
    <property type="expression patterns" value="Expressed in granulocyte and 129 other cell types or tissues"/>
</dbReference>
<dbReference type="ExpressionAtlas" id="Q08881">
    <property type="expression patterns" value="baseline and differential"/>
</dbReference>
<dbReference type="GO" id="GO:0005911">
    <property type="term" value="C:cell-cell junction"/>
    <property type="evidence" value="ECO:0007669"/>
    <property type="project" value="Ensembl"/>
</dbReference>
<dbReference type="GO" id="GO:0005829">
    <property type="term" value="C:cytosol"/>
    <property type="evidence" value="ECO:0000314"/>
    <property type="project" value="HPA"/>
</dbReference>
<dbReference type="GO" id="GO:0005634">
    <property type="term" value="C:nucleus"/>
    <property type="evidence" value="ECO:0000250"/>
    <property type="project" value="UniProtKB"/>
</dbReference>
<dbReference type="GO" id="GO:0005886">
    <property type="term" value="C:plasma membrane"/>
    <property type="evidence" value="ECO:0000318"/>
    <property type="project" value="GO_Central"/>
</dbReference>
<dbReference type="GO" id="GO:0005524">
    <property type="term" value="F:ATP binding"/>
    <property type="evidence" value="ECO:0007669"/>
    <property type="project" value="UniProtKB-KW"/>
</dbReference>
<dbReference type="GO" id="GO:0004715">
    <property type="term" value="F:non-membrane spanning protein tyrosine kinase activity"/>
    <property type="evidence" value="ECO:0000314"/>
    <property type="project" value="UniProtKB"/>
</dbReference>
<dbReference type="GO" id="GO:0008270">
    <property type="term" value="F:zinc ion binding"/>
    <property type="evidence" value="ECO:0007669"/>
    <property type="project" value="UniProtKB-KW"/>
</dbReference>
<dbReference type="GO" id="GO:0002250">
    <property type="term" value="P:adaptive immune response"/>
    <property type="evidence" value="ECO:0000250"/>
    <property type="project" value="UniProtKB"/>
</dbReference>
<dbReference type="GO" id="GO:0050853">
    <property type="term" value="P:B cell receptor signaling pathway"/>
    <property type="evidence" value="ECO:0000318"/>
    <property type="project" value="GO_Central"/>
</dbReference>
<dbReference type="GO" id="GO:0006968">
    <property type="term" value="P:cellular defense response"/>
    <property type="evidence" value="ECO:0000304"/>
    <property type="project" value="ProtInc"/>
</dbReference>
<dbReference type="GO" id="GO:0046629">
    <property type="term" value="P:gamma-delta T cell activation"/>
    <property type="evidence" value="ECO:0000250"/>
    <property type="project" value="UniProtKB"/>
</dbReference>
<dbReference type="GO" id="GO:0035556">
    <property type="term" value="P:intracellular signal transduction"/>
    <property type="evidence" value="ECO:0007669"/>
    <property type="project" value="InterPro"/>
</dbReference>
<dbReference type="GO" id="GO:0001865">
    <property type="term" value="P:NK T cell differentiation"/>
    <property type="evidence" value="ECO:0000318"/>
    <property type="project" value="GO_Central"/>
</dbReference>
<dbReference type="GO" id="GO:0001819">
    <property type="term" value="P:positive regulation of cytokine production"/>
    <property type="evidence" value="ECO:0000250"/>
    <property type="project" value="UniProtKB"/>
</dbReference>
<dbReference type="GO" id="GO:0007165">
    <property type="term" value="P:signal transduction"/>
    <property type="evidence" value="ECO:0000304"/>
    <property type="project" value="ProtInc"/>
</dbReference>
<dbReference type="GO" id="GO:0042110">
    <property type="term" value="P:T cell activation"/>
    <property type="evidence" value="ECO:0000304"/>
    <property type="project" value="UniProtKB"/>
</dbReference>
<dbReference type="GO" id="GO:0050852">
    <property type="term" value="P:T cell receptor signaling pathway"/>
    <property type="evidence" value="ECO:0000250"/>
    <property type="project" value="UniProtKB"/>
</dbReference>
<dbReference type="CDD" id="cd01238">
    <property type="entry name" value="PH_Btk"/>
    <property type="match status" value="1"/>
</dbReference>
<dbReference type="CDD" id="cd05112">
    <property type="entry name" value="PTKc_Itk"/>
    <property type="match status" value="1"/>
</dbReference>
<dbReference type="CDD" id="cd10396">
    <property type="entry name" value="SH2_Tec_Itk"/>
    <property type="match status" value="1"/>
</dbReference>
<dbReference type="CDD" id="cd11908">
    <property type="entry name" value="SH3_ITK"/>
    <property type="match status" value="1"/>
</dbReference>
<dbReference type="FunFam" id="1.10.510.10:FF:000052">
    <property type="entry name" value="Tyrosine-protein kinase"/>
    <property type="match status" value="1"/>
</dbReference>
<dbReference type="FunFam" id="2.30.29.30:FF:000244">
    <property type="entry name" value="Tyrosine-protein kinase"/>
    <property type="match status" value="1"/>
</dbReference>
<dbReference type="FunFam" id="2.30.30.40:FF:000176">
    <property type="entry name" value="Tyrosine-protein kinase"/>
    <property type="match status" value="1"/>
</dbReference>
<dbReference type="FunFam" id="3.30.200.20:FF:000053">
    <property type="entry name" value="Tyrosine-protein kinase"/>
    <property type="match status" value="1"/>
</dbReference>
<dbReference type="FunFam" id="3.30.505.10:FF:000061">
    <property type="entry name" value="Tyrosine-protein kinase"/>
    <property type="match status" value="1"/>
</dbReference>
<dbReference type="Gene3D" id="2.30.29.30">
    <property type="entry name" value="Pleckstrin-homology domain (PH domain)/Phosphotyrosine-binding domain (PTB)"/>
    <property type="match status" value="1"/>
</dbReference>
<dbReference type="Gene3D" id="3.30.505.10">
    <property type="entry name" value="SH2 domain"/>
    <property type="match status" value="1"/>
</dbReference>
<dbReference type="Gene3D" id="2.30.30.40">
    <property type="entry name" value="SH3 Domains"/>
    <property type="match status" value="1"/>
</dbReference>
<dbReference type="Gene3D" id="1.10.510.10">
    <property type="entry name" value="Transferase(Phosphotransferase) domain 1"/>
    <property type="match status" value="1"/>
</dbReference>
<dbReference type="InterPro" id="IPR042785">
    <property type="entry name" value="ITK_PTKc"/>
</dbReference>
<dbReference type="InterPro" id="IPR035583">
    <property type="entry name" value="ITK_SH3"/>
</dbReference>
<dbReference type="InterPro" id="IPR011009">
    <property type="entry name" value="Kinase-like_dom_sf"/>
</dbReference>
<dbReference type="InterPro" id="IPR050198">
    <property type="entry name" value="Non-receptor_tyrosine_kinases"/>
</dbReference>
<dbReference type="InterPro" id="IPR011993">
    <property type="entry name" value="PH-like_dom_sf"/>
</dbReference>
<dbReference type="InterPro" id="IPR001849">
    <property type="entry name" value="PH_domain"/>
</dbReference>
<dbReference type="InterPro" id="IPR000719">
    <property type="entry name" value="Prot_kinase_dom"/>
</dbReference>
<dbReference type="InterPro" id="IPR017441">
    <property type="entry name" value="Protein_kinase_ATP_BS"/>
</dbReference>
<dbReference type="InterPro" id="IPR001245">
    <property type="entry name" value="Ser-Thr/Tyr_kinase_cat_dom"/>
</dbReference>
<dbReference type="InterPro" id="IPR000980">
    <property type="entry name" value="SH2"/>
</dbReference>
<dbReference type="InterPro" id="IPR036860">
    <property type="entry name" value="SH2_dom_sf"/>
</dbReference>
<dbReference type="InterPro" id="IPR036028">
    <property type="entry name" value="SH3-like_dom_sf"/>
</dbReference>
<dbReference type="InterPro" id="IPR001452">
    <property type="entry name" value="SH3_domain"/>
</dbReference>
<dbReference type="InterPro" id="IPR008266">
    <property type="entry name" value="Tyr_kinase_AS"/>
</dbReference>
<dbReference type="InterPro" id="IPR020635">
    <property type="entry name" value="Tyr_kinase_cat_dom"/>
</dbReference>
<dbReference type="InterPro" id="IPR001562">
    <property type="entry name" value="Znf_Btk_motif"/>
</dbReference>
<dbReference type="PANTHER" id="PTHR24418">
    <property type="entry name" value="TYROSINE-PROTEIN KINASE"/>
    <property type="match status" value="1"/>
</dbReference>
<dbReference type="Pfam" id="PF00779">
    <property type="entry name" value="BTK"/>
    <property type="match status" value="1"/>
</dbReference>
<dbReference type="Pfam" id="PF00169">
    <property type="entry name" value="PH"/>
    <property type="match status" value="1"/>
</dbReference>
<dbReference type="Pfam" id="PF07714">
    <property type="entry name" value="PK_Tyr_Ser-Thr"/>
    <property type="match status" value="1"/>
</dbReference>
<dbReference type="Pfam" id="PF00017">
    <property type="entry name" value="SH2"/>
    <property type="match status" value="1"/>
</dbReference>
<dbReference type="Pfam" id="PF00018">
    <property type="entry name" value="SH3_1"/>
    <property type="match status" value="1"/>
</dbReference>
<dbReference type="PRINTS" id="PR00401">
    <property type="entry name" value="SH2DOMAIN"/>
</dbReference>
<dbReference type="PRINTS" id="PR00109">
    <property type="entry name" value="TYRKINASE"/>
</dbReference>
<dbReference type="SMART" id="SM00107">
    <property type="entry name" value="BTK"/>
    <property type="match status" value="1"/>
</dbReference>
<dbReference type="SMART" id="SM00233">
    <property type="entry name" value="PH"/>
    <property type="match status" value="1"/>
</dbReference>
<dbReference type="SMART" id="SM00252">
    <property type="entry name" value="SH2"/>
    <property type="match status" value="1"/>
</dbReference>
<dbReference type="SMART" id="SM00326">
    <property type="entry name" value="SH3"/>
    <property type="match status" value="1"/>
</dbReference>
<dbReference type="SMART" id="SM00219">
    <property type="entry name" value="TyrKc"/>
    <property type="match status" value="1"/>
</dbReference>
<dbReference type="SUPFAM" id="SSF50729">
    <property type="entry name" value="PH domain-like"/>
    <property type="match status" value="1"/>
</dbReference>
<dbReference type="SUPFAM" id="SSF56112">
    <property type="entry name" value="Protein kinase-like (PK-like)"/>
    <property type="match status" value="1"/>
</dbReference>
<dbReference type="SUPFAM" id="SSF55550">
    <property type="entry name" value="SH2 domain"/>
    <property type="match status" value="1"/>
</dbReference>
<dbReference type="SUPFAM" id="SSF50044">
    <property type="entry name" value="SH3-domain"/>
    <property type="match status" value="1"/>
</dbReference>
<dbReference type="PROSITE" id="PS50003">
    <property type="entry name" value="PH_DOMAIN"/>
    <property type="match status" value="1"/>
</dbReference>
<dbReference type="PROSITE" id="PS00107">
    <property type="entry name" value="PROTEIN_KINASE_ATP"/>
    <property type="match status" value="1"/>
</dbReference>
<dbReference type="PROSITE" id="PS50011">
    <property type="entry name" value="PROTEIN_KINASE_DOM"/>
    <property type="match status" value="1"/>
</dbReference>
<dbReference type="PROSITE" id="PS00109">
    <property type="entry name" value="PROTEIN_KINASE_TYR"/>
    <property type="match status" value="1"/>
</dbReference>
<dbReference type="PROSITE" id="PS50001">
    <property type="entry name" value="SH2"/>
    <property type="match status" value="1"/>
</dbReference>
<dbReference type="PROSITE" id="PS50002">
    <property type="entry name" value="SH3"/>
    <property type="match status" value="1"/>
</dbReference>
<dbReference type="PROSITE" id="PS51113">
    <property type="entry name" value="ZF_BTK"/>
    <property type="match status" value="1"/>
</dbReference>
<sequence length="620" mass="71831">MNNFILLEEQLIKKSQQKRRTSPSNFKVRFFVLTKASLAYFEDRHGKKRTLKGSIELSRIKCVEIVKSDISIPCHYKYPFQVVHDNYLLYVFAPDRESRQRWVLALKEETRNNNSLVPKYHPNFWMDGKWRCCSQLEKLATGCAQYDPTKNASKKPLPPTPEDNRRPLWEPEETVVIALYDYQTNDPQELALRRNEEYCLLDSSEIHWWRVQDRNGHEGYVPSSYLVEKSPNNLETYEWYNKSISRDKAEKLLLDTGKEGAFMVRDSRTAGTYTVSVFTKAVVSENNPCIKHYHIKETNDNPKRYYVAEKYVFDSIPLLINYHQHNGGGLVTRLRYPVCFGRQKAPVTAGLRYGKWVIDPSELTFVQEIGSGQFGLVHLGYWLNKDKVAIKTIREGAMSEEDFIEEAEVMMKLSHPKLVQLYGVCLEQAPICLVFEFMEHGCLSDYLRTQRGLFAAETLLGMCLDVCEGMAYLEEACVIHRDLAARNCLVGENQVIKVSDFGMTRFVLDDQYTSSTGTKFPVKWASPEVFSFSRYSSKSDVWSFGVLMWEVFSEGKIPYENRSNSEVVEDISTGFRLYKPRLASTHVYQIMNHCWKERPEDRPAFSRLLRQLAEIAESGL</sequence>
<protein>
    <recommendedName>
        <fullName>Tyrosine-protein kinase ITK/TSK</fullName>
        <ecNumber>2.7.10.2</ecNumber>
    </recommendedName>
    <alternativeName>
        <fullName>Interleukin-2-inducible T-cell kinase</fullName>
        <shortName>IL-2-inducible T-cell kinase</shortName>
    </alternativeName>
    <alternativeName>
        <fullName>Kinase EMT</fullName>
    </alternativeName>
    <alternativeName>
        <fullName>T-cell-specific kinase</fullName>
    </alternativeName>
    <alternativeName>
        <fullName>Tyrosine-protein kinase Lyk</fullName>
    </alternativeName>
</protein>
<organism>
    <name type="scientific">Homo sapiens</name>
    <name type="common">Human</name>
    <dbReference type="NCBI Taxonomy" id="9606"/>
    <lineage>
        <taxon>Eukaryota</taxon>
        <taxon>Metazoa</taxon>
        <taxon>Chordata</taxon>
        <taxon>Craniata</taxon>
        <taxon>Vertebrata</taxon>
        <taxon>Euteleostomi</taxon>
        <taxon>Mammalia</taxon>
        <taxon>Eutheria</taxon>
        <taxon>Euarchontoglires</taxon>
        <taxon>Primates</taxon>
        <taxon>Haplorrhini</taxon>
        <taxon>Catarrhini</taxon>
        <taxon>Hominidae</taxon>
        <taxon>Homo</taxon>
    </lineage>
</organism>
<feature type="chain" id="PRO_0000088106" description="Tyrosine-protein kinase ITK/TSK">
    <location>
        <begin position="1"/>
        <end position="620"/>
    </location>
</feature>
<feature type="domain" description="PH" evidence="3">
    <location>
        <begin position="4"/>
        <end position="111"/>
    </location>
</feature>
<feature type="domain" description="SH3" evidence="6">
    <location>
        <begin position="171"/>
        <end position="231"/>
    </location>
</feature>
<feature type="domain" description="SH2" evidence="5">
    <location>
        <begin position="239"/>
        <end position="338"/>
    </location>
</feature>
<feature type="domain" description="Protein kinase" evidence="4">
    <location>
        <begin position="363"/>
        <end position="615"/>
    </location>
</feature>
<feature type="zinc finger region" description="Btk-type" evidence="7">
    <location>
        <begin position="113"/>
        <end position="149"/>
    </location>
</feature>
<feature type="active site" description="Proton acceptor" evidence="4 8">
    <location>
        <position position="482"/>
    </location>
</feature>
<feature type="binding site" evidence="7">
    <location>
        <position position="121"/>
    </location>
    <ligand>
        <name>Zn(2+)</name>
        <dbReference type="ChEBI" id="CHEBI:29105"/>
    </ligand>
</feature>
<feature type="binding site" evidence="7">
    <location>
        <position position="132"/>
    </location>
    <ligand>
        <name>Zn(2+)</name>
        <dbReference type="ChEBI" id="CHEBI:29105"/>
    </ligand>
</feature>
<feature type="binding site" evidence="7">
    <location>
        <position position="133"/>
    </location>
    <ligand>
        <name>Zn(2+)</name>
        <dbReference type="ChEBI" id="CHEBI:29105"/>
    </ligand>
</feature>
<feature type="binding site" evidence="7">
    <location>
        <position position="143"/>
    </location>
    <ligand>
        <name>Zn(2+)</name>
        <dbReference type="ChEBI" id="CHEBI:29105"/>
    </ligand>
</feature>
<feature type="binding site" evidence="4">
    <location>
        <begin position="369"/>
        <end position="377"/>
    </location>
    <ligand>
        <name>ATP</name>
        <dbReference type="ChEBI" id="CHEBI:30616"/>
    </ligand>
</feature>
<feature type="binding site" evidence="4">
    <location>
        <position position="391"/>
    </location>
    <ligand>
        <name>ATP</name>
        <dbReference type="ChEBI" id="CHEBI:30616"/>
    </ligand>
</feature>
<feature type="modified residue" description="Phosphotyrosine; by autocatalysis" evidence="11">
    <location>
        <position position="180"/>
    </location>
</feature>
<feature type="modified residue" description="Phosphotyrosine; by LCK" evidence="25">
    <location>
        <position position="512"/>
    </location>
</feature>
<feature type="modified residue" description="Phosphoserine" evidence="25">
    <location>
        <position position="565"/>
    </location>
</feature>
<feature type="sequence variant" id="VAR_041710" description="In a metastatic melanoma sample; somatic mutation; dbSNP:rs1753502279." evidence="16">
    <original>R</original>
    <variation>K</variation>
    <location>
        <position position="19"/>
    </location>
</feature>
<feature type="sequence variant" id="VAR_041711" description="In a metastatic melanoma sample; somatic mutation." evidence="16">
    <original>P</original>
    <variation>L</variation>
    <location>
        <position position="23"/>
    </location>
</feature>
<feature type="sequence variant" id="VAR_051696" description="In dbSNP:rs17054374.">
    <original>R</original>
    <variation>Q</variation>
    <location>
        <position position="193"/>
    </location>
</feature>
<feature type="sequence variant" id="VAR_063424" description="In LPFS1; shows nearly undetectable mutant ITK protein consistent with severe protein instability; dbSNP:rs121908191." evidence="17">
    <original>R</original>
    <variation>W</variation>
    <location>
        <position position="335"/>
    </location>
</feature>
<feature type="sequence variant" id="VAR_041712" description="In a gastric adenocarcinoma sample; somatic mutation; dbSNP:rs779372373." evidence="16">
    <original>R</original>
    <variation>Q</variation>
    <location>
        <position position="451"/>
    </location>
</feature>
<feature type="sequence variant" id="VAR_041713" description="In dbSNP:rs34482255." evidence="16">
    <original>R</original>
    <variation>W</variation>
    <location>
        <position position="581"/>
    </location>
</feature>
<feature type="sequence variant" id="VAR_041714" description="In dbSNP:rs56005928." evidence="16">
    <original>V</original>
    <variation>I</variation>
    <location>
        <position position="587"/>
    </location>
</feature>
<feature type="mutagenesis site" description="Complete loss of interaction with PPIA/CYPA." evidence="13">
    <original>P</original>
    <variation>G</variation>
    <location>
        <position position="288"/>
    </location>
</feature>
<feature type="sequence conflict" description="In Ref. 6; AA sequence." evidence="24" ref="6">
    <original>PE</original>
    <variation>GS</variation>
    <location>
        <begin position="171"/>
        <end position="172"/>
    </location>
</feature>
<feature type="sequence conflict" description="In Ref. 2; AAB28072." evidence="24" ref="2">
    <original>V</original>
    <variation>W</variation>
    <location>
        <position position="331"/>
    </location>
</feature>
<feature type="strand" evidence="26">
    <location>
        <begin position="127"/>
        <end position="133"/>
    </location>
</feature>
<feature type="strand" evidence="26">
    <location>
        <begin position="148"/>
        <end position="152"/>
    </location>
</feature>
<feature type="strand" evidence="28">
    <location>
        <begin position="171"/>
        <end position="173"/>
    </location>
</feature>
<feature type="strand" evidence="27">
    <location>
        <begin position="175"/>
        <end position="180"/>
    </location>
</feature>
<feature type="strand" evidence="28">
    <location>
        <begin position="187"/>
        <end position="189"/>
    </location>
</feature>
<feature type="strand" evidence="27">
    <location>
        <begin position="197"/>
        <end position="205"/>
    </location>
</feature>
<feature type="strand" evidence="27">
    <location>
        <begin position="208"/>
        <end position="212"/>
    </location>
</feature>
<feature type="strand" evidence="27">
    <location>
        <begin position="214"/>
        <end position="216"/>
    </location>
</feature>
<feature type="strand" evidence="27">
    <location>
        <begin position="218"/>
        <end position="221"/>
    </location>
</feature>
<feature type="helix" evidence="27">
    <location>
        <begin position="223"/>
        <end position="225"/>
    </location>
</feature>
<feature type="strand" evidence="27">
    <location>
        <begin position="226"/>
        <end position="228"/>
    </location>
</feature>
<feature type="helix" evidence="31">
    <location>
        <begin position="360"/>
        <end position="362"/>
    </location>
</feature>
<feature type="strand" evidence="31">
    <location>
        <begin position="363"/>
        <end position="371"/>
    </location>
</feature>
<feature type="strand" evidence="32">
    <location>
        <begin position="373"/>
        <end position="375"/>
    </location>
</feature>
<feature type="strand" evidence="31">
    <location>
        <begin position="376"/>
        <end position="382"/>
    </location>
</feature>
<feature type="turn" evidence="31">
    <location>
        <begin position="383"/>
        <end position="385"/>
    </location>
</feature>
<feature type="strand" evidence="31">
    <location>
        <begin position="386"/>
        <end position="393"/>
    </location>
</feature>
<feature type="turn" evidence="29">
    <location>
        <begin position="395"/>
        <end position="397"/>
    </location>
</feature>
<feature type="helix" evidence="31">
    <location>
        <begin position="400"/>
        <end position="411"/>
    </location>
</feature>
<feature type="strand" evidence="31">
    <location>
        <begin position="421"/>
        <end position="425"/>
    </location>
</feature>
<feature type="strand" evidence="31">
    <location>
        <begin position="427"/>
        <end position="436"/>
    </location>
</feature>
<feature type="helix" evidence="31">
    <location>
        <begin position="443"/>
        <end position="448"/>
    </location>
</feature>
<feature type="turn" evidence="31">
    <location>
        <begin position="449"/>
        <end position="452"/>
    </location>
</feature>
<feature type="helix" evidence="31">
    <location>
        <begin position="456"/>
        <end position="475"/>
    </location>
</feature>
<feature type="helix" evidence="31">
    <location>
        <begin position="485"/>
        <end position="487"/>
    </location>
</feature>
<feature type="strand" evidence="31">
    <location>
        <begin position="488"/>
        <end position="490"/>
    </location>
</feature>
<feature type="helix" evidence="31">
    <location>
        <begin position="492"/>
        <end position="494"/>
    </location>
</feature>
<feature type="strand" evidence="31">
    <location>
        <begin position="496"/>
        <end position="498"/>
    </location>
</feature>
<feature type="helix" evidence="31">
    <location>
        <begin position="503"/>
        <end position="506"/>
    </location>
</feature>
<feature type="helix" evidence="31">
    <location>
        <begin position="510"/>
        <end position="513"/>
    </location>
</feature>
<feature type="helix" evidence="31">
    <location>
        <begin position="522"/>
        <end position="524"/>
    </location>
</feature>
<feature type="helix" evidence="31">
    <location>
        <begin position="527"/>
        <end position="532"/>
    </location>
</feature>
<feature type="helix" evidence="31">
    <location>
        <begin position="537"/>
        <end position="552"/>
    </location>
</feature>
<feature type="turn" evidence="33">
    <location>
        <begin position="553"/>
        <end position="555"/>
    </location>
</feature>
<feature type="turn" evidence="31">
    <location>
        <begin position="558"/>
        <end position="561"/>
    </location>
</feature>
<feature type="helix" evidence="31">
    <location>
        <begin position="564"/>
        <end position="572"/>
    </location>
</feature>
<feature type="strand" evidence="30">
    <location>
        <begin position="581"/>
        <end position="583"/>
    </location>
</feature>
<feature type="helix" evidence="31">
    <location>
        <begin position="585"/>
        <end position="594"/>
    </location>
</feature>
<feature type="helix" evidence="31">
    <location>
        <begin position="599"/>
        <end position="601"/>
    </location>
</feature>
<feature type="helix" evidence="31">
    <location>
        <begin position="605"/>
        <end position="617"/>
    </location>
</feature>
<reference key="1">
    <citation type="journal article" date="1993" name="FEBS Lett.">
        <title>A novel human tyrosine kinase gene inducible in T cells by interleukin 2.</title>
        <authorList>
            <person name="Tanaka N."/>
            <person name="Asao H."/>
            <person name="Ohtani K."/>
            <person name="Nakamura M."/>
            <person name="Sugamura K."/>
        </authorList>
    </citation>
    <scope>NUCLEOTIDE SEQUENCE [MRNA]</scope>
    <scope>INDUCTION</scope>
</reference>
<reference key="2">
    <citation type="journal article" date="1993" name="Blood">
        <title>Identification, cloning, and characterization of a novel human T-cell-specific tyrosine kinase located at the hematopoietin complex on chromosome 5q.</title>
        <authorList>
            <person name="Gibson S."/>
            <person name="Leung B."/>
            <person name="Squire J.A."/>
            <person name="Hill M."/>
            <person name="Arima N."/>
            <person name="Goss P."/>
            <person name="Hogg D."/>
            <person name="Mills G.B."/>
        </authorList>
    </citation>
    <scope>NUCLEOTIDE SEQUENCE [MRNA]</scope>
    <source>
        <tissue>Thymus</tissue>
    </source>
</reference>
<reference key="3">
    <citation type="journal article" date="2004" name="Nat. Genet.">
        <title>Complete sequencing and characterization of 21,243 full-length human cDNAs.</title>
        <authorList>
            <person name="Ota T."/>
            <person name="Suzuki Y."/>
            <person name="Nishikawa T."/>
            <person name="Otsuki T."/>
            <person name="Sugiyama T."/>
            <person name="Irie R."/>
            <person name="Wakamatsu A."/>
            <person name="Hayashi K."/>
            <person name="Sato H."/>
            <person name="Nagai K."/>
            <person name="Kimura K."/>
            <person name="Makita H."/>
            <person name="Sekine M."/>
            <person name="Obayashi M."/>
            <person name="Nishi T."/>
            <person name="Shibahara T."/>
            <person name="Tanaka T."/>
            <person name="Ishii S."/>
            <person name="Yamamoto J."/>
            <person name="Saito K."/>
            <person name="Kawai Y."/>
            <person name="Isono Y."/>
            <person name="Nakamura Y."/>
            <person name="Nagahari K."/>
            <person name="Murakami K."/>
            <person name="Yasuda T."/>
            <person name="Iwayanagi T."/>
            <person name="Wagatsuma M."/>
            <person name="Shiratori A."/>
            <person name="Sudo H."/>
            <person name="Hosoiri T."/>
            <person name="Kaku Y."/>
            <person name="Kodaira H."/>
            <person name="Kondo H."/>
            <person name="Sugawara M."/>
            <person name="Takahashi M."/>
            <person name="Kanda K."/>
            <person name="Yokoi T."/>
            <person name="Furuya T."/>
            <person name="Kikkawa E."/>
            <person name="Omura Y."/>
            <person name="Abe K."/>
            <person name="Kamihara K."/>
            <person name="Katsuta N."/>
            <person name="Sato K."/>
            <person name="Tanikawa M."/>
            <person name="Yamazaki M."/>
            <person name="Ninomiya K."/>
            <person name="Ishibashi T."/>
            <person name="Yamashita H."/>
            <person name="Murakawa K."/>
            <person name="Fujimori K."/>
            <person name="Tanai H."/>
            <person name="Kimata M."/>
            <person name="Watanabe M."/>
            <person name="Hiraoka S."/>
            <person name="Chiba Y."/>
            <person name="Ishida S."/>
            <person name="Ono Y."/>
            <person name="Takiguchi S."/>
            <person name="Watanabe S."/>
            <person name="Yosida M."/>
            <person name="Hotuta T."/>
            <person name="Kusano J."/>
            <person name="Kanehori K."/>
            <person name="Takahashi-Fujii A."/>
            <person name="Hara H."/>
            <person name="Tanase T.-O."/>
            <person name="Nomura Y."/>
            <person name="Togiya S."/>
            <person name="Komai F."/>
            <person name="Hara R."/>
            <person name="Takeuchi K."/>
            <person name="Arita M."/>
            <person name="Imose N."/>
            <person name="Musashino K."/>
            <person name="Yuuki H."/>
            <person name="Oshima A."/>
            <person name="Sasaki N."/>
            <person name="Aotsuka S."/>
            <person name="Yoshikawa Y."/>
            <person name="Matsunawa H."/>
            <person name="Ichihara T."/>
            <person name="Shiohata N."/>
            <person name="Sano S."/>
            <person name="Moriya S."/>
            <person name="Momiyama H."/>
            <person name="Satoh N."/>
            <person name="Takami S."/>
            <person name="Terashima Y."/>
            <person name="Suzuki O."/>
            <person name="Nakagawa S."/>
            <person name="Senoh A."/>
            <person name="Mizoguchi H."/>
            <person name="Goto Y."/>
            <person name="Shimizu F."/>
            <person name="Wakebe H."/>
            <person name="Hishigaki H."/>
            <person name="Watanabe T."/>
            <person name="Sugiyama A."/>
            <person name="Takemoto M."/>
            <person name="Kawakami B."/>
            <person name="Yamazaki M."/>
            <person name="Watanabe K."/>
            <person name="Kumagai A."/>
            <person name="Itakura S."/>
            <person name="Fukuzumi Y."/>
            <person name="Fujimori Y."/>
            <person name="Komiyama M."/>
            <person name="Tashiro H."/>
            <person name="Tanigami A."/>
            <person name="Fujiwara T."/>
            <person name="Ono T."/>
            <person name="Yamada K."/>
            <person name="Fujii Y."/>
            <person name="Ozaki K."/>
            <person name="Hirao M."/>
            <person name="Ohmori Y."/>
            <person name="Kawabata A."/>
            <person name="Hikiji T."/>
            <person name="Kobatake N."/>
            <person name="Inagaki H."/>
            <person name="Ikema Y."/>
            <person name="Okamoto S."/>
            <person name="Okitani R."/>
            <person name="Kawakami T."/>
            <person name="Noguchi S."/>
            <person name="Itoh T."/>
            <person name="Shigeta K."/>
            <person name="Senba T."/>
            <person name="Matsumura K."/>
            <person name="Nakajima Y."/>
            <person name="Mizuno T."/>
            <person name="Morinaga M."/>
            <person name="Sasaki M."/>
            <person name="Togashi T."/>
            <person name="Oyama M."/>
            <person name="Hata H."/>
            <person name="Watanabe M."/>
            <person name="Komatsu T."/>
            <person name="Mizushima-Sugano J."/>
            <person name="Satoh T."/>
            <person name="Shirai Y."/>
            <person name="Takahashi Y."/>
            <person name="Nakagawa K."/>
            <person name="Okumura K."/>
            <person name="Nagase T."/>
            <person name="Nomura N."/>
            <person name="Kikuchi H."/>
            <person name="Masuho Y."/>
            <person name="Yamashita R."/>
            <person name="Nakai K."/>
            <person name="Yada T."/>
            <person name="Nakamura Y."/>
            <person name="Ohara O."/>
            <person name="Isogai T."/>
            <person name="Sugano S."/>
        </authorList>
    </citation>
    <scope>NUCLEOTIDE SEQUENCE [LARGE SCALE MRNA]</scope>
    <source>
        <tissue>Thymus</tissue>
    </source>
</reference>
<reference key="4">
    <citation type="submission" date="2005-09" db="EMBL/GenBank/DDBJ databases">
        <authorList>
            <person name="Mural R.J."/>
            <person name="Istrail S."/>
            <person name="Sutton G.G."/>
            <person name="Florea L."/>
            <person name="Halpern A.L."/>
            <person name="Mobarry C.M."/>
            <person name="Lippert R."/>
            <person name="Walenz B."/>
            <person name="Shatkay H."/>
            <person name="Dew I."/>
            <person name="Miller J.R."/>
            <person name="Flanigan M.J."/>
            <person name="Edwards N.J."/>
            <person name="Bolanos R."/>
            <person name="Fasulo D."/>
            <person name="Halldorsson B.V."/>
            <person name="Hannenhalli S."/>
            <person name="Turner R."/>
            <person name="Yooseph S."/>
            <person name="Lu F."/>
            <person name="Nusskern D.R."/>
            <person name="Shue B.C."/>
            <person name="Zheng X.H."/>
            <person name="Zhong F."/>
            <person name="Delcher A.L."/>
            <person name="Huson D.H."/>
            <person name="Kravitz S.A."/>
            <person name="Mouchard L."/>
            <person name="Reinert K."/>
            <person name="Remington K.A."/>
            <person name="Clark A.G."/>
            <person name="Waterman M.S."/>
            <person name="Eichler E.E."/>
            <person name="Adams M.D."/>
            <person name="Hunkapiller M.W."/>
            <person name="Myers E.W."/>
            <person name="Venter J.C."/>
        </authorList>
    </citation>
    <scope>NUCLEOTIDE SEQUENCE [LARGE SCALE GENOMIC DNA]</scope>
</reference>
<reference key="5">
    <citation type="journal article" date="2004" name="Genome Res.">
        <title>The status, quality, and expansion of the NIH full-length cDNA project: the Mammalian Gene Collection (MGC).</title>
        <authorList>
            <consortium name="The MGC Project Team"/>
        </authorList>
    </citation>
    <scope>NUCLEOTIDE SEQUENCE [LARGE SCALE MRNA]</scope>
</reference>
<reference key="6">
    <citation type="journal article" date="2003" name="Biochim. Biophys. Acta">
        <title>Identification of phosphorylation sites within the SH3 domains of Tec family tyrosine kinases.</title>
        <authorList>
            <person name="Nore B.F."/>
            <person name="Mattsson P.T."/>
            <person name="Antonsson P."/>
            <person name="Backesjo C.-M."/>
            <person name="Westlund A."/>
            <person name="Lennartsson J."/>
            <person name="Hansson H."/>
            <person name="Low P."/>
            <person name="Ronnstrand L."/>
            <person name="Smith C.I.E."/>
        </authorList>
    </citation>
    <scope>PROTEIN SEQUENCE OF 171-192</scope>
    <scope>PHOSPHORYLATION AT TYR-180</scope>
</reference>
<reference key="7">
    <citation type="journal article" date="1997" name="J. Biol. Chem.">
        <title>Lck phosphorylates the activation loop tyrosine of the Itk kinase domain and activates Itk kinase activity.</title>
        <authorList>
            <person name="Heyeck S.D."/>
            <person name="Wilcox H.M."/>
            <person name="Bunnell S.C."/>
            <person name="Berg L.J."/>
        </authorList>
    </citation>
    <scope>PHOSPHORYLATION BY LCK</scope>
</reference>
<reference key="8">
    <citation type="journal article" date="1998" name="Int. Immunol.">
        <title>CD2-mediated activation of the Tec-family tyrosine kinase ITK is controlled by proline-rich stretch-4 of the CD2 cytoplasmic tail.</title>
        <authorList>
            <person name="King P.D."/>
            <person name="Sadra A."/>
            <person name="Teng J.M."/>
            <person name="Bell G.M."/>
            <person name="Dupont B."/>
        </authorList>
    </citation>
    <scope>INDUCTION</scope>
</reference>
<reference key="9">
    <citation type="journal article" date="2000" name="Immunity">
        <title>Tec kinases: a family with multiple roles in immunity.</title>
        <authorList>
            <person name="Yang W.C."/>
            <person name="Collette Y."/>
            <person name="Nunes J.A."/>
            <person name="Olive D."/>
        </authorList>
    </citation>
    <scope>DOMAIN</scope>
</reference>
<reference key="10">
    <citation type="journal article" date="2002" name="Biochemistry">
        <title>Phosphorylation of the linker for activation of T-cells by Itk promotes recruitment of Vav.</title>
        <authorList>
            <person name="Perez-Villar J.J."/>
            <person name="Whitney G.S."/>
            <person name="Sitnick M.T."/>
            <person name="Dunn R.J."/>
            <person name="Venkatesan S."/>
            <person name="O'Day K."/>
            <person name="Schieven G.L."/>
            <person name="Lin T.A."/>
            <person name="Kanner S.B."/>
        </authorList>
    </citation>
    <scope>FUNCTION IN PHOSPHORYLATION OF LAT</scope>
</reference>
<reference key="11">
    <citation type="journal article" date="2003" name="J. Immunol.">
        <title>Inducible T cell tyrosine kinase regulates actin-dependent cytoskeletal events induced by the T cell antigen receptor.</title>
        <authorList>
            <person name="Grasis J.A."/>
            <person name="Browne C.D."/>
            <person name="Tsoukas C.D."/>
        </authorList>
    </citation>
    <scope>FUNCTION</scope>
</reference>
<reference key="12">
    <citation type="journal article" date="2004" name="Anal. Chem.">
        <title>Robust phosphoproteomic profiling of tyrosine phosphorylation sites from human T cells using immobilized metal affinity chromatography and tandem mass spectrometry.</title>
        <authorList>
            <person name="Brill L.M."/>
            <person name="Salomon A.R."/>
            <person name="Ficarro S.B."/>
            <person name="Mukherji M."/>
            <person name="Stettler-Gill M."/>
            <person name="Peters E.C."/>
        </authorList>
    </citation>
    <scope>IDENTIFICATION BY MASS SPECTROMETRY [LARGE SCALE ANALYSIS]</scope>
    <source>
        <tissue>Leukemic T-cell</tissue>
    </source>
</reference>
<reference key="13">
    <citation type="journal article" date="2004" name="Immunity">
        <title>Cyclophilin A regulates TCR signal strength in CD4+ T cells via a proline-directed conformational switch in Itk.</title>
        <authorList>
            <person name="Colgan J."/>
            <person name="Asmal M."/>
            <person name="Neagu M."/>
            <person name="Yu B."/>
            <person name="Schneidkraut J."/>
            <person name="Lee Y."/>
            <person name="Sokolskaja E."/>
            <person name="Andreotti A."/>
            <person name="Luban J."/>
        </authorList>
    </citation>
    <scope>INTERACTION WITH PPIA/CYPA</scope>
    <scope>MUTAGENESIS OF PRO-288</scope>
</reference>
<reference key="14">
    <citation type="journal article" date="2005" name="J. Immunol.">
        <title>Kinase-independent functions for Itk in TCR-induced regulation of Vav and the actin cytoskeleton.</title>
        <authorList>
            <person name="Dombroski D."/>
            <person name="Houghtling R.A."/>
            <person name="Labno C.M."/>
            <person name="Precht P."/>
            <person name="Takesono A."/>
            <person name="Caplen N.J."/>
            <person name="Billadeau D.D."/>
            <person name="Wange R.L."/>
            <person name="Burkhardt J.K."/>
            <person name="Schwartzberg P.L."/>
        </authorList>
    </citation>
    <scope>INTERACTION WITH VAV1</scope>
</reference>
<reference key="15">
    <citation type="journal article" date="2006" name="J. Biol. Chem.">
        <title>Tec kinase Itk forms membrane clusters specifically in the vicinity of recruiting receptors.</title>
        <authorList>
            <person name="Qi Q."/>
            <person name="Sahu N."/>
            <person name="August A."/>
        </authorList>
    </citation>
    <scope>SUBCELLULAR LOCATION</scope>
</reference>
<reference key="16">
    <citation type="journal article" date="2009" name="BMC Immunol.">
        <title>Identification of SH3 domain interaction partners of human FasL (CD178) by phage display screening.</title>
        <authorList>
            <person name="Voss M."/>
            <person name="Lettau M."/>
            <person name="Janssen O."/>
        </authorList>
    </citation>
    <scope>INTERACTION WITH FASLG</scope>
</reference>
<reference key="17">
    <citation type="journal article" date="2009" name="J. Mol. Biol.">
        <title>SH2-dependent autophosphorylation within the Tec family kinase Itk.</title>
        <authorList>
            <person name="Joseph R.E."/>
            <person name="Severin A."/>
            <person name="Min L."/>
            <person name="Fulton D.B."/>
            <person name="Andreotti A.H."/>
        </authorList>
    </citation>
    <scope>AUTOPHOSPHORYLATION</scope>
</reference>
<reference key="18">
    <citation type="journal article" date="2009" name="Sci. Signal.">
        <title>Quantitative phosphoproteomic analysis of T cell receptor signaling reveals system-wide modulation of protein-protein interactions.</title>
        <authorList>
            <person name="Mayya V."/>
            <person name="Lundgren D.H."/>
            <person name="Hwang S.-I."/>
            <person name="Rezaul K."/>
            <person name="Wu L."/>
            <person name="Eng J.K."/>
            <person name="Rodionov V."/>
            <person name="Han D.K."/>
        </authorList>
    </citation>
    <scope>PHOSPHORYLATION [LARGE SCALE ANALYSIS] AT TYR-512 AND SER-565</scope>
    <scope>IDENTIFICATION BY MASS SPECTROMETRY [LARGE SCALE ANALYSIS]</scope>
    <source>
        <tissue>Leukemic T-cell</tissue>
    </source>
</reference>
<reference key="19">
    <citation type="journal article" date="2010" name="PLoS ONE">
        <title>Development and validation of a method for profiling post-translational modification activities using protein microarrays.</title>
        <authorList>
            <person name="Del Rincon S.V."/>
            <person name="Rogers J."/>
            <person name="Widschwendter M."/>
            <person name="Sun D."/>
            <person name="Sieburg H.B."/>
            <person name="Spruck C."/>
        </authorList>
    </citation>
    <scope>UBIQUITINATION</scope>
</reference>
<reference key="20">
    <citation type="journal article" date="2011" name="EMBO J.">
        <title>Sequential phosphorylation of SLP-76 at tyrosine 173 is required for activation of T and mast cells.</title>
        <authorList>
            <person name="Sela M."/>
            <person name="Bogin Y."/>
            <person name="Beach D."/>
            <person name="Oellerich T."/>
            <person name="Lehne J."/>
            <person name="Smith-Garvin J.E."/>
            <person name="Okumura M."/>
            <person name="Starosvetsky E."/>
            <person name="Kosoff R."/>
            <person name="Libman E."/>
            <person name="Koretzky G."/>
            <person name="Kambayashi T."/>
            <person name="Urlaub H."/>
            <person name="Wienands J."/>
            <person name="Chernoff J."/>
            <person name="Yablonski D."/>
        </authorList>
    </citation>
    <scope>FUNCTION IN PHOSPHORYLATION OF LCP2</scope>
</reference>
<reference key="21">
    <citation type="submission" date="2007-10" db="PDB data bank">
        <title>Solution structure of the BTK motif and the SH3 domain of tyrosine-protein kinase ITK from human.</title>
        <authorList>
            <consortium name="RIKEN structural genomics initiative (RSGI)"/>
        </authorList>
    </citation>
    <scope>STRUCTURE BY NMR OF 113-239</scope>
</reference>
<reference key="22">
    <citation type="journal article" date="2007" name="Nature">
        <title>Patterns of somatic mutation in human cancer genomes.</title>
        <authorList>
            <person name="Greenman C."/>
            <person name="Stephens P."/>
            <person name="Smith R."/>
            <person name="Dalgliesh G.L."/>
            <person name="Hunter C."/>
            <person name="Bignell G."/>
            <person name="Davies H."/>
            <person name="Teague J."/>
            <person name="Butler A."/>
            <person name="Stevens C."/>
            <person name="Edkins S."/>
            <person name="O'Meara S."/>
            <person name="Vastrik I."/>
            <person name="Schmidt E.E."/>
            <person name="Avis T."/>
            <person name="Barthorpe S."/>
            <person name="Bhamra G."/>
            <person name="Buck G."/>
            <person name="Choudhury B."/>
            <person name="Clements J."/>
            <person name="Cole J."/>
            <person name="Dicks E."/>
            <person name="Forbes S."/>
            <person name="Gray K."/>
            <person name="Halliday K."/>
            <person name="Harrison R."/>
            <person name="Hills K."/>
            <person name="Hinton J."/>
            <person name="Jenkinson A."/>
            <person name="Jones D."/>
            <person name="Menzies A."/>
            <person name="Mironenko T."/>
            <person name="Perry J."/>
            <person name="Raine K."/>
            <person name="Richardson D."/>
            <person name="Shepherd R."/>
            <person name="Small A."/>
            <person name="Tofts C."/>
            <person name="Varian J."/>
            <person name="Webb T."/>
            <person name="West S."/>
            <person name="Widaa S."/>
            <person name="Yates A."/>
            <person name="Cahill D.P."/>
            <person name="Louis D.N."/>
            <person name="Goldstraw P."/>
            <person name="Nicholson A.G."/>
            <person name="Brasseur F."/>
            <person name="Looijenga L."/>
            <person name="Weber B.L."/>
            <person name="Chiew Y.-E."/>
            <person name="DeFazio A."/>
            <person name="Greaves M.F."/>
            <person name="Green A.R."/>
            <person name="Campbell P."/>
            <person name="Birney E."/>
            <person name="Easton D.F."/>
            <person name="Chenevix-Trench G."/>
            <person name="Tan M.-H."/>
            <person name="Khoo S.K."/>
            <person name="Teh B.T."/>
            <person name="Yuen S.T."/>
            <person name="Leung S.Y."/>
            <person name="Wooster R."/>
            <person name="Futreal P.A."/>
            <person name="Stratton M.R."/>
        </authorList>
    </citation>
    <scope>VARIANTS [LARGE SCALE ANALYSIS] LYS-19; LEU-23; GLN-451; TRP-581 AND ILE-587</scope>
</reference>
<reference key="23">
    <citation type="journal article" date="2009" name="J. Clin. Invest.">
        <title>Girls homozygous for an IL-2-inducible T cell kinase mutation that leads to protein deficiency develop fatal EBV-associated lymphoproliferation.</title>
        <authorList>
            <person name="Huck K."/>
            <person name="Feyen O."/>
            <person name="Niehues T."/>
            <person name="Rueschendorf F."/>
            <person name="Huebner N."/>
            <person name="Laws H.-J."/>
            <person name="Telieps T."/>
            <person name="Knapp S."/>
            <person name="Wacker H.-H."/>
            <person name="Meindl A."/>
            <person name="Jumaa H."/>
            <person name="Borkhardt A."/>
        </authorList>
    </citation>
    <scope>VARIANT LPFS1 TRP-335</scope>
    <scope>CHARACTERIZATION OF VARIANT LPSA1 TRP-335</scope>
</reference>
<keyword id="KW-0002">3D-structure</keyword>
<keyword id="KW-1064">Adaptive immunity</keyword>
<keyword id="KW-0067">ATP-binding</keyword>
<keyword id="KW-0963">Cytoplasm</keyword>
<keyword id="KW-0903">Direct protein sequencing</keyword>
<keyword id="KW-0225">Disease variant</keyword>
<keyword id="KW-0391">Immunity</keyword>
<keyword id="KW-0418">Kinase</keyword>
<keyword id="KW-0479">Metal-binding</keyword>
<keyword id="KW-0547">Nucleotide-binding</keyword>
<keyword id="KW-0539">Nucleus</keyword>
<keyword id="KW-0597">Phosphoprotein</keyword>
<keyword id="KW-1267">Proteomics identification</keyword>
<keyword id="KW-1185">Reference proteome</keyword>
<keyword id="KW-0727">SH2 domain</keyword>
<keyword id="KW-0728">SH3 domain</keyword>
<keyword id="KW-0808">Transferase</keyword>
<keyword id="KW-0829">Tyrosine-protein kinase</keyword>
<keyword id="KW-0832">Ubl conjugation</keyword>
<keyword id="KW-0862">Zinc</keyword>
<keyword id="KW-0863">Zinc-finger</keyword>
<proteinExistence type="evidence at protein level"/>
<accession>Q08881</accession>
<accession>B2R752</accession>
<accession>Q32ML7</accession>
<name>ITK_HUMAN</name>